<accession>Q8CEK3</accession>
<dbReference type="EMBL" id="AK020535">
    <property type="protein sequence ID" value="BAC25634.1"/>
    <property type="molecule type" value="mRNA"/>
</dbReference>
<dbReference type="CCDS" id="CCDS50273.1"/>
<dbReference type="RefSeq" id="NP_898946.1">
    <property type="nucleotide sequence ID" value="NM_183123.2"/>
</dbReference>
<dbReference type="RefSeq" id="XP_006526415.1">
    <property type="nucleotide sequence ID" value="XM_006526352.4"/>
</dbReference>
<dbReference type="SMR" id="Q8CEK3"/>
<dbReference type="FunCoup" id="Q8CEK3">
    <property type="interactions" value="19"/>
</dbReference>
<dbReference type="STRING" id="10090.ENSMUSP00000063376"/>
<dbReference type="GlyCosmos" id="Q8CEK3">
    <property type="glycosylation" value="1 site, No reported glycans"/>
</dbReference>
<dbReference type="GlyGen" id="Q8CEK3">
    <property type="glycosylation" value="1 site, 1 N-linked glycan (1 site)"/>
</dbReference>
<dbReference type="iPTMnet" id="Q8CEK3"/>
<dbReference type="PaxDb" id="10090-ENSMUSP00000063376"/>
<dbReference type="PeptideAtlas" id="Q8CEK3"/>
<dbReference type="ProteomicsDB" id="261617"/>
<dbReference type="DNASU" id="77424"/>
<dbReference type="Ensembl" id="ENSMUST00000066328.5">
    <property type="protein sequence ID" value="ENSMUSP00000063376.4"/>
    <property type="gene ID" value="ENSMUSG00000053729.5"/>
</dbReference>
<dbReference type="GeneID" id="77424"/>
<dbReference type="KEGG" id="mmu:77424"/>
<dbReference type="UCSC" id="uc008eut.1">
    <property type="organism name" value="mouse"/>
</dbReference>
<dbReference type="AGR" id="MGI:1924674"/>
<dbReference type="CTD" id="77424"/>
<dbReference type="MGI" id="MGI:1924674">
    <property type="gene designation" value="Spinkl"/>
</dbReference>
<dbReference type="VEuPathDB" id="HostDB:ENSMUSG00000053729"/>
<dbReference type="GeneTree" id="ENSGT00940000164814"/>
<dbReference type="HOGENOM" id="CLU_169765_0_0_1"/>
<dbReference type="InParanoid" id="Q8CEK3"/>
<dbReference type="OrthoDB" id="328123at2759"/>
<dbReference type="PhylomeDB" id="Q8CEK3"/>
<dbReference type="BioGRID-ORCS" id="77424">
    <property type="hits" value="1 hit in 37 CRISPR screens"/>
</dbReference>
<dbReference type="ChiTaRS" id="Spinkl">
    <property type="organism name" value="mouse"/>
</dbReference>
<dbReference type="PRO" id="PR:Q8CEK3"/>
<dbReference type="Proteomes" id="UP000000589">
    <property type="component" value="Chromosome 18"/>
</dbReference>
<dbReference type="RNAct" id="Q8CEK3">
    <property type="molecule type" value="protein"/>
</dbReference>
<dbReference type="Bgee" id="ENSMUSG00000053729">
    <property type="expression patterns" value="Expressed in seminal vesicle and 18 other cell types or tissues"/>
</dbReference>
<dbReference type="GO" id="GO:0005615">
    <property type="term" value="C:extracellular space"/>
    <property type="evidence" value="ECO:0000314"/>
    <property type="project" value="MGI"/>
</dbReference>
<dbReference type="GO" id="GO:1902491">
    <property type="term" value="P:negative regulation of sperm capacitation"/>
    <property type="evidence" value="ECO:0000314"/>
    <property type="project" value="MGI"/>
</dbReference>
<dbReference type="GO" id="GO:1902093">
    <property type="term" value="P:positive regulation of flagellated sperm motility"/>
    <property type="evidence" value="ECO:0000314"/>
    <property type="project" value="MGI"/>
</dbReference>
<dbReference type="CDD" id="cd00104">
    <property type="entry name" value="KAZAL_FS"/>
    <property type="match status" value="1"/>
</dbReference>
<dbReference type="Gene3D" id="3.30.60.30">
    <property type="match status" value="1"/>
</dbReference>
<dbReference type="InterPro" id="IPR002350">
    <property type="entry name" value="Kazal_dom"/>
</dbReference>
<dbReference type="InterPro" id="IPR036058">
    <property type="entry name" value="Kazal_dom_sf"/>
</dbReference>
<dbReference type="PANTHER" id="PTHR21312">
    <property type="entry name" value="SERINE PROTEASE INHIBITOR"/>
    <property type="match status" value="1"/>
</dbReference>
<dbReference type="PANTHER" id="PTHR21312:SF30">
    <property type="entry name" value="SERINE PROTEASE INHIBITOR KAZAL-TYPE 11-RELATED"/>
    <property type="match status" value="1"/>
</dbReference>
<dbReference type="Pfam" id="PF00050">
    <property type="entry name" value="Kazal_1"/>
    <property type="match status" value="1"/>
</dbReference>
<dbReference type="SMART" id="SM00280">
    <property type="entry name" value="KAZAL"/>
    <property type="match status" value="1"/>
</dbReference>
<dbReference type="SUPFAM" id="SSF100895">
    <property type="entry name" value="Kazal-type serine protease inhibitors"/>
    <property type="match status" value="1"/>
</dbReference>
<dbReference type="PROSITE" id="PS51465">
    <property type="entry name" value="KAZAL_2"/>
    <property type="match status" value="1"/>
</dbReference>
<comment type="function">
    <text evidence="2">Does not function as an inhibitor of trypsin, chymotrypsin, subtilisin or elastase. Binds sperm and enhances sperm motility. May act as a decapacitation factor, suppresses BSA-stimulated sperm capacitation and blocks sperm-oocyte interactions in vitro.</text>
</comment>
<comment type="subcellular location">
    <subcellularLocation>
        <location evidence="2">Secreted</location>
    </subcellularLocation>
</comment>
<comment type="tissue specificity">
    <text evidence="2">Luminal fluid and mucosal folds of the seminal vesicles (at protein level). Not detected in brain, heart, lung, liver, kidney, stomach, small intestine, muscle, skin, thymus, placenta or bladder.</text>
</comment>
<comment type="developmental stage">
    <text evidence="2">First appears at low levels in 3 week old mice. Levels increase rapidly after 4 weeks, highest levels are reached in 8 week old mice.</text>
</comment>
<comment type="induction">
    <text evidence="2">By testosterone.</text>
</comment>
<gene>
    <name type="primary">Spinkl</name>
</gene>
<organism>
    <name type="scientific">Mus musculus</name>
    <name type="common">Mouse</name>
    <dbReference type="NCBI Taxonomy" id="10090"/>
    <lineage>
        <taxon>Eukaryota</taxon>
        <taxon>Metazoa</taxon>
        <taxon>Chordata</taxon>
        <taxon>Craniata</taxon>
        <taxon>Vertebrata</taxon>
        <taxon>Euteleostomi</taxon>
        <taxon>Mammalia</taxon>
        <taxon>Eutheria</taxon>
        <taxon>Euarchontoglires</taxon>
        <taxon>Glires</taxon>
        <taxon>Rodentia</taxon>
        <taxon>Myomorpha</taxon>
        <taxon>Muroidea</taxon>
        <taxon>Muridae</taxon>
        <taxon>Murinae</taxon>
        <taxon>Mus</taxon>
        <taxon>Mus</taxon>
    </lineage>
</organism>
<sequence>MSSTWIKFLFILTLVLLPYSVFSVNIFAGPENVIKEPNCTMYKSKSECSNIAENPVCADDRNTYYNECYFCIEKVVEKLKYRYHGICIYK</sequence>
<keyword id="KW-0903">Direct protein sequencing</keyword>
<keyword id="KW-0325">Glycoprotein</keyword>
<keyword id="KW-1185">Reference proteome</keyword>
<keyword id="KW-0964">Secreted</keyword>
<keyword id="KW-0732">Signal</keyword>
<proteinExistence type="evidence at protein level"/>
<evidence type="ECO:0000255" key="1">
    <source>
        <dbReference type="PROSITE-ProRule" id="PRU00798"/>
    </source>
</evidence>
<evidence type="ECO:0000269" key="2">
    <source>
    </source>
</evidence>
<evidence type="ECO:0000303" key="3">
    <source>
    </source>
</evidence>
<evidence type="ECO:0000305" key="4"/>
<evidence type="ECO:0000312" key="5">
    <source>
        <dbReference type="EMBL" id="BAC25634.1"/>
    </source>
</evidence>
<reference evidence="5" key="1">
    <citation type="journal article" date="2005" name="Science">
        <title>The transcriptional landscape of the mammalian genome.</title>
        <authorList>
            <person name="Carninci P."/>
            <person name="Kasukawa T."/>
            <person name="Katayama S."/>
            <person name="Gough J."/>
            <person name="Frith M.C."/>
            <person name="Maeda N."/>
            <person name="Oyama R."/>
            <person name="Ravasi T."/>
            <person name="Lenhard B."/>
            <person name="Wells C."/>
            <person name="Kodzius R."/>
            <person name="Shimokawa K."/>
            <person name="Bajic V.B."/>
            <person name="Brenner S.E."/>
            <person name="Batalov S."/>
            <person name="Forrest A.R."/>
            <person name="Zavolan M."/>
            <person name="Davis M.J."/>
            <person name="Wilming L.G."/>
            <person name="Aidinis V."/>
            <person name="Allen J.E."/>
            <person name="Ambesi-Impiombato A."/>
            <person name="Apweiler R."/>
            <person name="Aturaliya R.N."/>
            <person name="Bailey T.L."/>
            <person name="Bansal M."/>
            <person name="Baxter L."/>
            <person name="Beisel K.W."/>
            <person name="Bersano T."/>
            <person name="Bono H."/>
            <person name="Chalk A.M."/>
            <person name="Chiu K.P."/>
            <person name="Choudhary V."/>
            <person name="Christoffels A."/>
            <person name="Clutterbuck D.R."/>
            <person name="Crowe M.L."/>
            <person name="Dalla E."/>
            <person name="Dalrymple B.P."/>
            <person name="de Bono B."/>
            <person name="Della Gatta G."/>
            <person name="di Bernardo D."/>
            <person name="Down T."/>
            <person name="Engstrom P."/>
            <person name="Fagiolini M."/>
            <person name="Faulkner G."/>
            <person name="Fletcher C.F."/>
            <person name="Fukushima T."/>
            <person name="Furuno M."/>
            <person name="Futaki S."/>
            <person name="Gariboldi M."/>
            <person name="Georgii-Hemming P."/>
            <person name="Gingeras T.R."/>
            <person name="Gojobori T."/>
            <person name="Green R.E."/>
            <person name="Gustincich S."/>
            <person name="Harbers M."/>
            <person name="Hayashi Y."/>
            <person name="Hensch T.K."/>
            <person name="Hirokawa N."/>
            <person name="Hill D."/>
            <person name="Huminiecki L."/>
            <person name="Iacono M."/>
            <person name="Ikeo K."/>
            <person name="Iwama A."/>
            <person name="Ishikawa T."/>
            <person name="Jakt M."/>
            <person name="Kanapin A."/>
            <person name="Katoh M."/>
            <person name="Kawasawa Y."/>
            <person name="Kelso J."/>
            <person name="Kitamura H."/>
            <person name="Kitano H."/>
            <person name="Kollias G."/>
            <person name="Krishnan S.P."/>
            <person name="Kruger A."/>
            <person name="Kummerfeld S.K."/>
            <person name="Kurochkin I.V."/>
            <person name="Lareau L.F."/>
            <person name="Lazarevic D."/>
            <person name="Lipovich L."/>
            <person name="Liu J."/>
            <person name="Liuni S."/>
            <person name="McWilliam S."/>
            <person name="Madan Babu M."/>
            <person name="Madera M."/>
            <person name="Marchionni L."/>
            <person name="Matsuda H."/>
            <person name="Matsuzawa S."/>
            <person name="Miki H."/>
            <person name="Mignone F."/>
            <person name="Miyake S."/>
            <person name="Morris K."/>
            <person name="Mottagui-Tabar S."/>
            <person name="Mulder N."/>
            <person name="Nakano N."/>
            <person name="Nakauchi H."/>
            <person name="Ng P."/>
            <person name="Nilsson R."/>
            <person name="Nishiguchi S."/>
            <person name="Nishikawa S."/>
            <person name="Nori F."/>
            <person name="Ohara O."/>
            <person name="Okazaki Y."/>
            <person name="Orlando V."/>
            <person name="Pang K.C."/>
            <person name="Pavan W.J."/>
            <person name="Pavesi G."/>
            <person name="Pesole G."/>
            <person name="Petrovsky N."/>
            <person name="Piazza S."/>
            <person name="Reed J."/>
            <person name="Reid J.F."/>
            <person name="Ring B.Z."/>
            <person name="Ringwald M."/>
            <person name="Rost B."/>
            <person name="Ruan Y."/>
            <person name="Salzberg S.L."/>
            <person name="Sandelin A."/>
            <person name="Schneider C."/>
            <person name="Schoenbach C."/>
            <person name="Sekiguchi K."/>
            <person name="Semple C.A."/>
            <person name="Seno S."/>
            <person name="Sessa L."/>
            <person name="Sheng Y."/>
            <person name="Shibata Y."/>
            <person name="Shimada H."/>
            <person name="Shimada K."/>
            <person name="Silva D."/>
            <person name="Sinclair B."/>
            <person name="Sperling S."/>
            <person name="Stupka E."/>
            <person name="Sugiura K."/>
            <person name="Sultana R."/>
            <person name="Takenaka Y."/>
            <person name="Taki K."/>
            <person name="Tammoja K."/>
            <person name="Tan S.L."/>
            <person name="Tang S."/>
            <person name="Taylor M.S."/>
            <person name="Tegner J."/>
            <person name="Teichmann S.A."/>
            <person name="Ueda H.R."/>
            <person name="van Nimwegen E."/>
            <person name="Verardo R."/>
            <person name="Wei C.L."/>
            <person name="Yagi K."/>
            <person name="Yamanishi H."/>
            <person name="Zabarovsky E."/>
            <person name="Zhu S."/>
            <person name="Zimmer A."/>
            <person name="Hide W."/>
            <person name="Bult C."/>
            <person name="Grimmond S.M."/>
            <person name="Teasdale R.D."/>
            <person name="Liu E.T."/>
            <person name="Brusic V."/>
            <person name="Quackenbush J."/>
            <person name="Wahlestedt C."/>
            <person name="Mattick J.S."/>
            <person name="Hume D.A."/>
            <person name="Kai C."/>
            <person name="Sasaki D."/>
            <person name="Tomaru Y."/>
            <person name="Fukuda S."/>
            <person name="Kanamori-Katayama M."/>
            <person name="Suzuki M."/>
            <person name="Aoki J."/>
            <person name="Arakawa T."/>
            <person name="Iida J."/>
            <person name="Imamura K."/>
            <person name="Itoh M."/>
            <person name="Kato T."/>
            <person name="Kawaji H."/>
            <person name="Kawagashira N."/>
            <person name="Kawashima T."/>
            <person name="Kojima M."/>
            <person name="Kondo S."/>
            <person name="Konno H."/>
            <person name="Nakano K."/>
            <person name="Ninomiya N."/>
            <person name="Nishio T."/>
            <person name="Okada M."/>
            <person name="Plessy C."/>
            <person name="Shibata K."/>
            <person name="Shiraki T."/>
            <person name="Suzuki S."/>
            <person name="Tagami M."/>
            <person name="Waki K."/>
            <person name="Watahiki A."/>
            <person name="Okamura-Oho Y."/>
            <person name="Suzuki H."/>
            <person name="Kawai J."/>
            <person name="Hayashizaki Y."/>
        </authorList>
    </citation>
    <scope>NUCLEOTIDE SEQUENCE [LARGE SCALE MRNA]</scope>
    <source>
        <strain evidence="5">C57BL/6J</strain>
        <tissue evidence="5">Urinary bladder</tissue>
    </source>
</reference>
<reference evidence="4" key="2">
    <citation type="journal article" date="2008" name="Reproduction">
        <title>SPINKL, a Kazal-type serine protease inhibitor-like protein purified from mouse seminal vesicle fluid, is able to inhibit sperm capacitation.</title>
        <authorList>
            <person name="Lin M.-H."/>
            <person name="Lee R.K.-K."/>
            <person name="Hwu Y.-M."/>
            <person name="Lu C.-H."/>
            <person name="Chu S.-L."/>
            <person name="Chen Y.-J."/>
            <person name="Chang W.-C."/>
            <person name="Li S.-H."/>
        </authorList>
    </citation>
    <scope>PROTEIN SEQUENCE OF 24-42 AND 46-82</scope>
    <scope>FUNCTION</scope>
    <scope>SUBCELLULAR LOCATION</scope>
    <scope>TISSUE SPECIFICITY</scope>
    <scope>DEVELOPMENTAL STAGE</scope>
    <scope>INDUCTION</scope>
    <scope>GLYCOSYLATION AT ASN-38</scope>
    <source>
        <strain evidence="2">ICR</strain>
        <tissue evidence="2">Seminal vesicle</tissue>
    </source>
</reference>
<name>SPIKL_MOUSE</name>
<protein>
    <recommendedName>
        <fullName evidence="3">Serine protease inhibitor kazal-like protein, minor form</fullName>
        <shortName evidence="3">SPINKL, minor form</shortName>
    </recommendedName>
    <component>
        <recommendedName>
            <fullName evidence="3">Serine protease inhibitor kazal-like protein, major form</fullName>
            <shortName evidence="3">SPINKL, major form</shortName>
        </recommendedName>
    </component>
</protein>
<feature type="signal peptide" evidence="2">
    <location>
        <begin position="1"/>
        <end position="23"/>
    </location>
</feature>
<feature type="chain" id="PRO_0000368186" description="Serine protease inhibitor kazal-like protein, minor form" evidence="2">
    <location>
        <begin position="24"/>
        <end position="90"/>
    </location>
</feature>
<feature type="chain" id="PRO_0000271263" description="Serine protease inhibitor kazal-like protein, major form" evidence="2">
    <location>
        <begin position="28"/>
        <end position="90"/>
    </location>
</feature>
<feature type="domain" description="Kazal-like" evidence="1">
    <location>
        <begin position="33"/>
        <end position="89"/>
    </location>
</feature>
<feature type="glycosylation site" description="N-linked (GlcNAc...) asparagine" evidence="2">
    <location>
        <position position="38"/>
    </location>
</feature>